<gene>
    <name evidence="1" type="primary">pnp</name>
    <name type="ordered locus">SaurJH1_1360</name>
</gene>
<accession>A6U193</accession>
<sequence>MSQEKKVFKTEWAGRSLTIETGQLAKQANGAVLVRYGDTVVLSTATASKEPRDGDFFPLTVNYEEKMYAAGKIPGGFKKREGRPGDDATLTARLIDRPIRPLFPKGYKHDVQIMNMVLSADPDCSPQMAAMIGSSMALSVSDIPFQGPIAGVNVGYIDGKYIINPTVEEKEVSRLDLEVAGHKDAVNMVEAGASEITEQEMLEAIFFGHEEIQRLVDFQQQIVDHIQPVKQEFIPAERDEALVERVKSLTEEKGLKETVLTFDKQQRDENLDNLKEEIVNEFIDEEDPENELLIKEVYAILNELVKEEVRRLIADEKIRPDGRKPDEIRPLDSEVGILPRTHGSGLFTRGQTQALSVLTLGALGDYQLIDGLGPEEEKRFMHHYNFPNFSVGETGPVRAPGRREIGHGALGERALKYIIPDTADFPYTIRIVSEVLESNGSSSQASICGSTLALMDAGVPIKAPVAGIAMGLVTREDSYTILTDIQGMEDALGDMDFKVAGTKEGITAIQMDIKIDGLTREIIEEALEQARRGRLEIMNHMLQTIDQPRTELSAYAPKVVTMTIKPDKIRDVIGPGGKKINEIIDETGVKLDIEQDGTIFIGAVDQAMINRAREIIEEITREAEVGQTYQATVKRIEKYGAFVGLFPGKDALLHISQISKNRIEKVEDVLKIGDTIEVKITEIDKQGRVNASHRALEE</sequence>
<keyword id="KW-0963">Cytoplasm</keyword>
<keyword id="KW-0460">Magnesium</keyword>
<keyword id="KW-0479">Metal-binding</keyword>
<keyword id="KW-0548">Nucleotidyltransferase</keyword>
<keyword id="KW-0694">RNA-binding</keyword>
<keyword id="KW-0808">Transferase</keyword>
<evidence type="ECO:0000255" key="1">
    <source>
        <dbReference type="HAMAP-Rule" id="MF_01595"/>
    </source>
</evidence>
<comment type="function">
    <text evidence="1">Involved in mRNA degradation. Catalyzes the phosphorolysis of single-stranded polyribonucleotides processively in the 3'- to 5'-direction.</text>
</comment>
<comment type="catalytic activity">
    <reaction evidence="1">
        <text>RNA(n+1) + phosphate = RNA(n) + a ribonucleoside 5'-diphosphate</text>
        <dbReference type="Rhea" id="RHEA:22096"/>
        <dbReference type="Rhea" id="RHEA-COMP:14527"/>
        <dbReference type="Rhea" id="RHEA-COMP:17342"/>
        <dbReference type="ChEBI" id="CHEBI:43474"/>
        <dbReference type="ChEBI" id="CHEBI:57930"/>
        <dbReference type="ChEBI" id="CHEBI:140395"/>
        <dbReference type="EC" id="2.7.7.8"/>
    </reaction>
</comment>
<comment type="cofactor">
    <cofactor evidence="1">
        <name>Mg(2+)</name>
        <dbReference type="ChEBI" id="CHEBI:18420"/>
    </cofactor>
</comment>
<comment type="subcellular location">
    <subcellularLocation>
        <location evidence="1">Cytoplasm</location>
    </subcellularLocation>
</comment>
<comment type="similarity">
    <text evidence="1">Belongs to the polyribonucleotide nucleotidyltransferase family.</text>
</comment>
<organism>
    <name type="scientific">Staphylococcus aureus (strain JH1)</name>
    <dbReference type="NCBI Taxonomy" id="359787"/>
    <lineage>
        <taxon>Bacteria</taxon>
        <taxon>Bacillati</taxon>
        <taxon>Bacillota</taxon>
        <taxon>Bacilli</taxon>
        <taxon>Bacillales</taxon>
        <taxon>Staphylococcaceae</taxon>
        <taxon>Staphylococcus</taxon>
    </lineage>
</organism>
<reference key="1">
    <citation type="submission" date="2007-06" db="EMBL/GenBank/DDBJ databases">
        <title>Complete sequence of chromosome of Staphylococcus aureus subsp. aureus JH1.</title>
        <authorList>
            <consortium name="US DOE Joint Genome Institute"/>
            <person name="Copeland A."/>
            <person name="Lucas S."/>
            <person name="Lapidus A."/>
            <person name="Barry K."/>
            <person name="Detter J.C."/>
            <person name="Glavina del Rio T."/>
            <person name="Hammon N."/>
            <person name="Israni S."/>
            <person name="Dalin E."/>
            <person name="Tice H."/>
            <person name="Pitluck S."/>
            <person name="Chain P."/>
            <person name="Malfatti S."/>
            <person name="Shin M."/>
            <person name="Vergez L."/>
            <person name="Schmutz J."/>
            <person name="Larimer F."/>
            <person name="Land M."/>
            <person name="Hauser L."/>
            <person name="Kyrpides N."/>
            <person name="Ivanova N."/>
            <person name="Tomasz A."/>
            <person name="Richardson P."/>
        </authorList>
    </citation>
    <scope>NUCLEOTIDE SEQUENCE [LARGE SCALE GENOMIC DNA]</scope>
    <source>
        <strain>JH1</strain>
    </source>
</reference>
<feature type="chain" id="PRO_1000087999" description="Polyribonucleotide nucleotidyltransferase">
    <location>
        <begin position="1"/>
        <end position="698"/>
    </location>
</feature>
<feature type="domain" description="KH" evidence="1">
    <location>
        <begin position="557"/>
        <end position="616"/>
    </location>
</feature>
<feature type="domain" description="S1 motif" evidence="1">
    <location>
        <begin position="626"/>
        <end position="694"/>
    </location>
</feature>
<feature type="binding site" evidence="1">
    <location>
        <position position="490"/>
    </location>
    <ligand>
        <name>Mg(2+)</name>
        <dbReference type="ChEBI" id="CHEBI:18420"/>
    </ligand>
</feature>
<feature type="binding site" evidence="1">
    <location>
        <position position="496"/>
    </location>
    <ligand>
        <name>Mg(2+)</name>
        <dbReference type="ChEBI" id="CHEBI:18420"/>
    </ligand>
</feature>
<protein>
    <recommendedName>
        <fullName evidence="1">Polyribonucleotide nucleotidyltransferase</fullName>
        <ecNumber evidence="1">2.7.7.8</ecNumber>
    </recommendedName>
    <alternativeName>
        <fullName evidence="1">Polynucleotide phosphorylase</fullName>
        <shortName evidence="1">PNPase</shortName>
    </alternativeName>
</protein>
<name>PNP_STAA2</name>
<dbReference type="EC" id="2.7.7.8" evidence="1"/>
<dbReference type="EMBL" id="CP000736">
    <property type="protein sequence ID" value="ABR52211.1"/>
    <property type="molecule type" value="Genomic_DNA"/>
</dbReference>
<dbReference type="SMR" id="A6U193"/>
<dbReference type="KEGG" id="sah:SaurJH1_1360"/>
<dbReference type="HOGENOM" id="CLU_004217_2_2_9"/>
<dbReference type="GO" id="GO:0005829">
    <property type="term" value="C:cytosol"/>
    <property type="evidence" value="ECO:0007669"/>
    <property type="project" value="TreeGrafter"/>
</dbReference>
<dbReference type="GO" id="GO:0000175">
    <property type="term" value="F:3'-5'-RNA exonuclease activity"/>
    <property type="evidence" value="ECO:0007669"/>
    <property type="project" value="TreeGrafter"/>
</dbReference>
<dbReference type="GO" id="GO:0000287">
    <property type="term" value="F:magnesium ion binding"/>
    <property type="evidence" value="ECO:0007669"/>
    <property type="project" value="UniProtKB-UniRule"/>
</dbReference>
<dbReference type="GO" id="GO:0004654">
    <property type="term" value="F:polyribonucleotide nucleotidyltransferase activity"/>
    <property type="evidence" value="ECO:0007669"/>
    <property type="project" value="UniProtKB-UniRule"/>
</dbReference>
<dbReference type="GO" id="GO:0003723">
    <property type="term" value="F:RNA binding"/>
    <property type="evidence" value="ECO:0007669"/>
    <property type="project" value="UniProtKB-UniRule"/>
</dbReference>
<dbReference type="GO" id="GO:0006402">
    <property type="term" value="P:mRNA catabolic process"/>
    <property type="evidence" value="ECO:0007669"/>
    <property type="project" value="UniProtKB-UniRule"/>
</dbReference>
<dbReference type="GO" id="GO:0006396">
    <property type="term" value="P:RNA processing"/>
    <property type="evidence" value="ECO:0007669"/>
    <property type="project" value="InterPro"/>
</dbReference>
<dbReference type="CDD" id="cd02393">
    <property type="entry name" value="KH-I_PNPase"/>
    <property type="match status" value="1"/>
</dbReference>
<dbReference type="CDD" id="cd11363">
    <property type="entry name" value="RNase_PH_PNPase_1"/>
    <property type="match status" value="1"/>
</dbReference>
<dbReference type="CDD" id="cd11364">
    <property type="entry name" value="RNase_PH_PNPase_2"/>
    <property type="match status" value="1"/>
</dbReference>
<dbReference type="CDD" id="cd04472">
    <property type="entry name" value="S1_PNPase"/>
    <property type="match status" value="1"/>
</dbReference>
<dbReference type="FunFam" id="2.40.50.140:FF:000023">
    <property type="entry name" value="Polyribonucleotide nucleotidyltransferase"/>
    <property type="match status" value="1"/>
</dbReference>
<dbReference type="FunFam" id="3.30.1370.10:FF:000001">
    <property type="entry name" value="Polyribonucleotide nucleotidyltransferase"/>
    <property type="match status" value="1"/>
</dbReference>
<dbReference type="FunFam" id="3.30.230.70:FF:000001">
    <property type="entry name" value="Polyribonucleotide nucleotidyltransferase"/>
    <property type="match status" value="1"/>
</dbReference>
<dbReference type="FunFam" id="3.30.230.70:FF:000002">
    <property type="entry name" value="Polyribonucleotide nucleotidyltransferase"/>
    <property type="match status" value="1"/>
</dbReference>
<dbReference type="Gene3D" id="3.30.230.70">
    <property type="entry name" value="GHMP Kinase, N-terminal domain"/>
    <property type="match status" value="2"/>
</dbReference>
<dbReference type="Gene3D" id="3.30.1370.10">
    <property type="entry name" value="K Homology domain, type 1"/>
    <property type="match status" value="1"/>
</dbReference>
<dbReference type="Gene3D" id="2.40.50.140">
    <property type="entry name" value="Nucleic acid-binding proteins"/>
    <property type="match status" value="1"/>
</dbReference>
<dbReference type="HAMAP" id="MF_01595">
    <property type="entry name" value="PNPase"/>
    <property type="match status" value="1"/>
</dbReference>
<dbReference type="InterPro" id="IPR001247">
    <property type="entry name" value="ExoRNase_PH_dom1"/>
</dbReference>
<dbReference type="InterPro" id="IPR015847">
    <property type="entry name" value="ExoRNase_PH_dom2"/>
</dbReference>
<dbReference type="InterPro" id="IPR036345">
    <property type="entry name" value="ExoRNase_PH_dom2_sf"/>
</dbReference>
<dbReference type="InterPro" id="IPR004087">
    <property type="entry name" value="KH_dom"/>
</dbReference>
<dbReference type="InterPro" id="IPR004088">
    <property type="entry name" value="KH_dom_type_1"/>
</dbReference>
<dbReference type="InterPro" id="IPR036612">
    <property type="entry name" value="KH_dom_type_1_sf"/>
</dbReference>
<dbReference type="InterPro" id="IPR012340">
    <property type="entry name" value="NA-bd_OB-fold"/>
</dbReference>
<dbReference type="InterPro" id="IPR012162">
    <property type="entry name" value="PNPase"/>
</dbReference>
<dbReference type="InterPro" id="IPR027408">
    <property type="entry name" value="PNPase/RNase_PH_dom_sf"/>
</dbReference>
<dbReference type="InterPro" id="IPR015848">
    <property type="entry name" value="PNPase_PH_RNA-bd_bac/org-type"/>
</dbReference>
<dbReference type="InterPro" id="IPR036456">
    <property type="entry name" value="PNPase_PH_RNA-bd_sf"/>
</dbReference>
<dbReference type="InterPro" id="IPR020568">
    <property type="entry name" value="Ribosomal_Su5_D2-typ_SF"/>
</dbReference>
<dbReference type="InterPro" id="IPR003029">
    <property type="entry name" value="S1_domain"/>
</dbReference>
<dbReference type="NCBIfam" id="TIGR03591">
    <property type="entry name" value="polynuc_phos"/>
    <property type="match status" value="1"/>
</dbReference>
<dbReference type="NCBIfam" id="NF008805">
    <property type="entry name" value="PRK11824.1"/>
    <property type="match status" value="1"/>
</dbReference>
<dbReference type="PANTHER" id="PTHR11252">
    <property type="entry name" value="POLYRIBONUCLEOTIDE NUCLEOTIDYLTRANSFERASE"/>
    <property type="match status" value="1"/>
</dbReference>
<dbReference type="PANTHER" id="PTHR11252:SF0">
    <property type="entry name" value="POLYRIBONUCLEOTIDE NUCLEOTIDYLTRANSFERASE 1, MITOCHONDRIAL"/>
    <property type="match status" value="1"/>
</dbReference>
<dbReference type="Pfam" id="PF00013">
    <property type="entry name" value="KH_1"/>
    <property type="match status" value="1"/>
</dbReference>
<dbReference type="Pfam" id="PF03726">
    <property type="entry name" value="PNPase"/>
    <property type="match status" value="1"/>
</dbReference>
<dbReference type="Pfam" id="PF01138">
    <property type="entry name" value="RNase_PH"/>
    <property type="match status" value="2"/>
</dbReference>
<dbReference type="Pfam" id="PF03725">
    <property type="entry name" value="RNase_PH_C"/>
    <property type="match status" value="2"/>
</dbReference>
<dbReference type="Pfam" id="PF00575">
    <property type="entry name" value="S1"/>
    <property type="match status" value="1"/>
</dbReference>
<dbReference type="PIRSF" id="PIRSF005499">
    <property type="entry name" value="PNPase"/>
    <property type="match status" value="1"/>
</dbReference>
<dbReference type="SMART" id="SM00322">
    <property type="entry name" value="KH"/>
    <property type="match status" value="1"/>
</dbReference>
<dbReference type="SMART" id="SM00316">
    <property type="entry name" value="S1"/>
    <property type="match status" value="1"/>
</dbReference>
<dbReference type="SUPFAM" id="SSF54791">
    <property type="entry name" value="Eukaryotic type KH-domain (KH-domain type I)"/>
    <property type="match status" value="1"/>
</dbReference>
<dbReference type="SUPFAM" id="SSF50249">
    <property type="entry name" value="Nucleic acid-binding proteins"/>
    <property type="match status" value="1"/>
</dbReference>
<dbReference type="SUPFAM" id="SSF46915">
    <property type="entry name" value="Polynucleotide phosphorylase/guanosine pentaphosphate synthase (PNPase/GPSI), domain 3"/>
    <property type="match status" value="1"/>
</dbReference>
<dbReference type="SUPFAM" id="SSF55666">
    <property type="entry name" value="Ribonuclease PH domain 2-like"/>
    <property type="match status" value="2"/>
</dbReference>
<dbReference type="SUPFAM" id="SSF54211">
    <property type="entry name" value="Ribosomal protein S5 domain 2-like"/>
    <property type="match status" value="2"/>
</dbReference>
<dbReference type="PROSITE" id="PS50084">
    <property type="entry name" value="KH_TYPE_1"/>
    <property type="match status" value="1"/>
</dbReference>
<dbReference type="PROSITE" id="PS50126">
    <property type="entry name" value="S1"/>
    <property type="match status" value="1"/>
</dbReference>
<proteinExistence type="inferred from homology"/>